<sequence>MWRCGGRQGLCVLRRLSGGHAHHRAWRWNSNRACERALQYKLGDKIHGFTVNQVTSVPELFLTAVKLTHDDTGARYLHLAREDTNNLFSVQFRTTPMDSTGVPHILEHTVLCGSQKYPCRDPFFKMLNRSLSTFMNAFTASDYTLYPFSTQNPKDFQNLLSVYLDATFFPCLRELDFWQEGWRLEHENPSDPQTPLVFKGVVFNEMKGAFTDNERIFSQHLQNRLLPDHTYSVVSGGDPLCIPELTWEQLKQFHATHYHPSNARFFTYGNFPLEQHLKQIHEEALSKFQKIEPSTVVPAQTPWDKPREFQITCGPDSFATDPSKQTTISVSFLLPDITDTFEAFTLSLLSSLLTSGPNSPFYKALIESGLGTDFSPDVGYNGYTREAYFSVGLQGIAEKDIETVRSLIDRTIDEVVEKGFEDDRIEALLHKIEIQMKHQSTSFGLMLTSYIASCWNHDGDPVELLKLGNQLAKFRQCLQENPKFLQEKVKQYFKNNQHKLTLSMRPDDKYHEKQAQVEATKLKQKVEALSPGDRQQIYEKGLELRSQQSKPQDASCLPALKVSDIEPTIPVTELDVVLTAGDIPVQYCAQPTNGMVYFRAFSSLNTLPEELRPYVPLFCSVLTKLGCGLLDYREQAQQIELKTGGMSASPHVLPDDSHMDTYEQGVLFSSLCLDRNLPDMMQLWSEIFNNPCFEEEEHFKVLVKMTAQELANGIPDSGHLYASIRAGRTLTPAGDLQETFSGMDQVRLMKRIAEMTDIKPILRKLPRIKKHLLNGDNMRCSVNATPQQMPQTEKAVEDFLRSIGRSKKERRPVRPHTVEKPVPSSSGGDAHVPHGSQVIRKLVMEPTFKPWQMKTHFLMPFPVNYVGECIRTVPYTDPDHASLKILARLMTAKFLHTEIREKGGAYGGGAKLSHNGIFTLYSYRDPNTIETLQSFGKAVDWAKSGKFTQQDIDEAKLSVFSTVDAPVAPSDKGMDHFLYGLSDEMKQAHREQLFAVSHDKLLAVSDRYLGTGKSTHGLAILGPENPKIAKDPSWIIQ</sequence>
<proteinExistence type="evidence at protein level"/>
<dbReference type="EC" id="3.4.24.-" evidence="5 9 10 12"/>
<dbReference type="EMBL" id="AF061243">
    <property type="protein sequence ID" value="AAC67244.1"/>
    <property type="molecule type" value="mRNA"/>
</dbReference>
<dbReference type="EMBL" id="AK002061">
    <property type="protein sequence ID" value="BAG51008.1"/>
    <property type="molecule type" value="mRNA"/>
</dbReference>
<dbReference type="EMBL" id="AK303406">
    <property type="protein sequence ID" value="BAG64460.1"/>
    <property type="molecule type" value="mRNA"/>
</dbReference>
<dbReference type="EMBL" id="AL451164">
    <property type="protein sequence ID" value="CAI40001.1"/>
    <property type="molecule type" value="Genomic_DNA"/>
</dbReference>
<dbReference type="EMBL" id="AL451164">
    <property type="protein sequence ID" value="CAI39997.1"/>
    <property type="status" value="ALT_SEQ"/>
    <property type="molecule type" value="Genomic_DNA"/>
</dbReference>
<dbReference type="EMBL" id="BC001150">
    <property type="protein sequence ID" value="AAH01150.1"/>
    <property type="status" value="ALT_INIT"/>
    <property type="molecule type" value="mRNA"/>
</dbReference>
<dbReference type="EMBL" id="BC005025">
    <property type="protein sequence ID" value="AAH05025.1"/>
    <property type="molecule type" value="mRNA"/>
</dbReference>
<dbReference type="EMBL" id="BC095422">
    <property type="protein sequence ID" value="AAH95422.1"/>
    <property type="molecule type" value="mRNA"/>
</dbReference>
<dbReference type="EMBL" id="BC111987">
    <property type="protein sequence ID" value="AAI11988.1"/>
    <property type="molecule type" value="mRNA"/>
</dbReference>
<dbReference type="EMBL" id="BC113369">
    <property type="protein sequence ID" value="AAI13370.1"/>
    <property type="molecule type" value="mRNA"/>
</dbReference>
<dbReference type="EMBL" id="AB029027">
    <property type="protein sequence ID" value="BAA83056.2"/>
    <property type="molecule type" value="mRNA"/>
</dbReference>
<dbReference type="CCDS" id="CCDS55699.1">
    <molecule id="Q5JRX3-2"/>
</dbReference>
<dbReference type="CCDS" id="CCDS55700.1">
    <molecule id="Q5JRX3-3"/>
</dbReference>
<dbReference type="CCDS" id="CCDS59208.1">
    <molecule id="Q5JRX3-1"/>
</dbReference>
<dbReference type="RefSeq" id="NP_001229236.1">
    <molecule id="Q5JRX3-2"/>
    <property type="nucleotide sequence ID" value="NM_001242307.2"/>
</dbReference>
<dbReference type="RefSeq" id="NP_001229238.1">
    <molecule id="Q5JRX3-3"/>
    <property type="nucleotide sequence ID" value="NM_001242309.1"/>
</dbReference>
<dbReference type="RefSeq" id="NP_055704.2">
    <molecule id="Q5JRX3-1"/>
    <property type="nucleotide sequence ID" value="NM_014889.3"/>
</dbReference>
<dbReference type="PDB" id="4L3T">
    <property type="method" value="X-ray"/>
    <property type="resolution" value="2.03 A"/>
    <property type="chains" value="A/B=33-1037"/>
</dbReference>
<dbReference type="PDB" id="4NGE">
    <property type="method" value="X-ray"/>
    <property type="resolution" value="2.70 A"/>
    <property type="chains" value="A/D=33-1037"/>
</dbReference>
<dbReference type="PDB" id="4RPU">
    <property type="method" value="X-ray"/>
    <property type="resolution" value="2.27 A"/>
    <property type="chains" value="A/B=33-1037"/>
</dbReference>
<dbReference type="PDB" id="6XOS">
    <property type="method" value="EM"/>
    <property type="resolution" value="3.70 A"/>
    <property type="chains" value="A=33-1037"/>
</dbReference>
<dbReference type="PDB" id="6XOT">
    <property type="method" value="EM"/>
    <property type="resolution" value="3.90 A"/>
    <property type="chains" value="A=33-1037"/>
</dbReference>
<dbReference type="PDB" id="6XOU">
    <property type="method" value="EM"/>
    <property type="resolution" value="4.00 A"/>
    <property type="chains" value="A=33-1037"/>
</dbReference>
<dbReference type="PDB" id="6XOV">
    <property type="method" value="EM"/>
    <property type="resolution" value="3.30 A"/>
    <property type="chains" value="A=33-1037"/>
</dbReference>
<dbReference type="PDB" id="6XOW">
    <property type="method" value="EM"/>
    <property type="resolution" value="4.60 A"/>
    <property type="chains" value="A=33-1037"/>
</dbReference>
<dbReference type="PDBsum" id="4L3T"/>
<dbReference type="PDBsum" id="4NGE"/>
<dbReference type="PDBsum" id="4RPU"/>
<dbReference type="PDBsum" id="6XOS"/>
<dbReference type="PDBsum" id="6XOT"/>
<dbReference type="PDBsum" id="6XOU"/>
<dbReference type="PDBsum" id="6XOV"/>
<dbReference type="PDBsum" id="6XOW"/>
<dbReference type="EMDB" id="EMD-22278"/>
<dbReference type="EMDB" id="EMD-22279"/>
<dbReference type="EMDB" id="EMD-22280"/>
<dbReference type="EMDB" id="EMD-22281"/>
<dbReference type="EMDB" id="EMD-22282"/>
<dbReference type="SASBDB" id="Q5JRX3"/>
<dbReference type="SMR" id="Q5JRX3"/>
<dbReference type="BioGRID" id="115786">
    <property type="interactions" value="201"/>
</dbReference>
<dbReference type="DIP" id="DIP-52900N"/>
<dbReference type="FunCoup" id="Q5JRX3">
    <property type="interactions" value="2549"/>
</dbReference>
<dbReference type="IntAct" id="Q5JRX3">
    <property type="interactions" value="65"/>
</dbReference>
<dbReference type="MINT" id="Q5JRX3"/>
<dbReference type="STRING" id="9606.ENSP00000370377"/>
<dbReference type="BindingDB" id="Q5JRX3"/>
<dbReference type="ChEMBL" id="CHEMBL3124731"/>
<dbReference type="MEROPS" id="M16.009"/>
<dbReference type="GlyGen" id="Q5JRX3">
    <property type="glycosylation" value="4 sites, 1 O-linked glycan (4 sites)"/>
</dbReference>
<dbReference type="iPTMnet" id="Q5JRX3"/>
<dbReference type="MetOSite" id="Q5JRX3"/>
<dbReference type="PhosphoSitePlus" id="Q5JRX3"/>
<dbReference type="SwissPalm" id="Q5JRX3"/>
<dbReference type="BioMuta" id="PITRM1"/>
<dbReference type="DMDM" id="485956568"/>
<dbReference type="jPOST" id="Q5JRX3"/>
<dbReference type="MassIVE" id="Q5JRX3"/>
<dbReference type="PaxDb" id="9606-ENSP00000370377"/>
<dbReference type="PeptideAtlas" id="Q5JRX3"/>
<dbReference type="ProteomicsDB" id="11495"/>
<dbReference type="ProteomicsDB" id="17899"/>
<dbReference type="ProteomicsDB" id="63119">
    <molecule id="Q5JRX3-1"/>
</dbReference>
<dbReference type="ProteomicsDB" id="63120">
    <molecule id="Q5JRX3-2"/>
</dbReference>
<dbReference type="Pumba" id="Q5JRX3"/>
<dbReference type="Antibodypedia" id="1721">
    <property type="antibodies" value="190 antibodies from 30 providers"/>
</dbReference>
<dbReference type="DNASU" id="10531"/>
<dbReference type="Ensembl" id="ENST00000224949.9">
    <molecule id="Q5JRX3-1"/>
    <property type="protein sequence ID" value="ENSP00000224949.4"/>
    <property type="gene ID" value="ENSG00000107959.17"/>
</dbReference>
<dbReference type="Ensembl" id="ENST00000380989.6">
    <molecule id="Q5JRX3-2"/>
    <property type="protein sequence ID" value="ENSP00000370377.2"/>
    <property type="gene ID" value="ENSG00000107959.17"/>
</dbReference>
<dbReference type="Ensembl" id="ENST00000451104.6">
    <molecule id="Q5JRX3-3"/>
    <property type="protein sequence ID" value="ENSP00000401201.2"/>
    <property type="gene ID" value="ENSG00000107959.17"/>
</dbReference>
<dbReference type="GeneID" id="10531"/>
<dbReference type="KEGG" id="hsa:10531"/>
<dbReference type="MANE-Select" id="ENST00000224949.9">
    <property type="protein sequence ID" value="ENSP00000224949.4"/>
    <property type="RefSeq nucleotide sequence ID" value="NM_014889.4"/>
    <property type="RefSeq protein sequence ID" value="NP_055704.2"/>
</dbReference>
<dbReference type="UCSC" id="uc001igt.3">
    <molecule id="Q5JRX3-1"/>
    <property type="organism name" value="human"/>
</dbReference>
<dbReference type="AGR" id="HGNC:17663"/>
<dbReference type="CTD" id="10531"/>
<dbReference type="DisGeNET" id="10531"/>
<dbReference type="GeneCards" id="PITRM1"/>
<dbReference type="HGNC" id="HGNC:17663">
    <property type="gene designation" value="PITRM1"/>
</dbReference>
<dbReference type="HPA" id="ENSG00000107959">
    <property type="expression patterns" value="Low tissue specificity"/>
</dbReference>
<dbReference type="MalaCards" id="PITRM1"/>
<dbReference type="MIM" id="618211">
    <property type="type" value="gene"/>
</dbReference>
<dbReference type="MIM" id="619405">
    <property type="type" value="phenotype"/>
</dbReference>
<dbReference type="neXtProt" id="NX_Q5JRX3"/>
<dbReference type="OpenTargets" id="ENSG00000107959"/>
<dbReference type="PharmGKB" id="PA134902269"/>
<dbReference type="VEuPathDB" id="HostDB:ENSG00000107959"/>
<dbReference type="eggNOG" id="KOG2019">
    <property type="taxonomic scope" value="Eukaryota"/>
</dbReference>
<dbReference type="GeneTree" id="ENSGT00390000018381"/>
<dbReference type="HOGENOM" id="CLU_009165_0_0_1"/>
<dbReference type="InParanoid" id="Q5JRX3"/>
<dbReference type="OMA" id="NYLYYIR"/>
<dbReference type="OrthoDB" id="10250783at2759"/>
<dbReference type="PAN-GO" id="Q5JRX3">
    <property type="GO annotations" value="3 GO annotations based on evolutionary models"/>
</dbReference>
<dbReference type="TreeFam" id="TF300333"/>
<dbReference type="BRENDA" id="3.4.24.56">
    <property type="organism ID" value="2681"/>
</dbReference>
<dbReference type="PathwayCommons" id="Q5JRX3"/>
<dbReference type="Reactome" id="R-HSA-1268020">
    <property type="pathway name" value="Mitochondrial protein import"/>
</dbReference>
<dbReference type="SignaLink" id="Q5JRX3"/>
<dbReference type="SIGNOR" id="Q5JRX3"/>
<dbReference type="BioGRID-ORCS" id="10531">
    <property type="hits" value="217 hits in 1174 CRISPR screens"/>
</dbReference>
<dbReference type="ChiTaRS" id="PITRM1">
    <property type="organism name" value="human"/>
</dbReference>
<dbReference type="EvolutionaryTrace" id="Q5JRX3"/>
<dbReference type="GeneWiki" id="PITRM1"/>
<dbReference type="GenomeRNAi" id="10531"/>
<dbReference type="Pharos" id="Q5JRX3">
    <property type="development level" value="Tchem"/>
</dbReference>
<dbReference type="PRO" id="PR:Q5JRX3"/>
<dbReference type="Proteomes" id="UP000005640">
    <property type="component" value="Chromosome 10"/>
</dbReference>
<dbReference type="RNAct" id="Q5JRX3">
    <property type="molecule type" value="protein"/>
</dbReference>
<dbReference type="Bgee" id="ENSG00000107959">
    <property type="expression patterns" value="Expressed in apex of heart and 196 other cell types or tissues"/>
</dbReference>
<dbReference type="ExpressionAtlas" id="Q5JRX3">
    <property type="expression patterns" value="baseline and differential"/>
</dbReference>
<dbReference type="GO" id="GO:0005759">
    <property type="term" value="C:mitochondrial matrix"/>
    <property type="evidence" value="ECO:0000314"/>
    <property type="project" value="UniProtKB"/>
</dbReference>
<dbReference type="GO" id="GO:0005739">
    <property type="term" value="C:mitochondrion"/>
    <property type="evidence" value="ECO:0000314"/>
    <property type="project" value="HPA"/>
</dbReference>
<dbReference type="GO" id="GO:0008047">
    <property type="term" value="F:enzyme activator activity"/>
    <property type="evidence" value="ECO:0000304"/>
    <property type="project" value="ProtInc"/>
</dbReference>
<dbReference type="GO" id="GO:0004222">
    <property type="term" value="F:metalloendopeptidase activity"/>
    <property type="evidence" value="ECO:0000314"/>
    <property type="project" value="UniProtKB"/>
</dbReference>
<dbReference type="GO" id="GO:0008237">
    <property type="term" value="F:metallopeptidase activity"/>
    <property type="evidence" value="ECO:0000269"/>
    <property type="project" value="Reactome"/>
</dbReference>
<dbReference type="GO" id="GO:0008270">
    <property type="term" value="F:zinc ion binding"/>
    <property type="evidence" value="ECO:0000314"/>
    <property type="project" value="UniProtKB"/>
</dbReference>
<dbReference type="GO" id="GO:0016485">
    <property type="term" value="P:protein processing"/>
    <property type="evidence" value="ECO:0000318"/>
    <property type="project" value="GO_Central"/>
</dbReference>
<dbReference type="GO" id="GO:0006626">
    <property type="term" value="P:protein targeting to mitochondrion"/>
    <property type="evidence" value="ECO:0000304"/>
    <property type="project" value="Reactome"/>
</dbReference>
<dbReference type="GO" id="GO:0006508">
    <property type="term" value="P:proteolysis"/>
    <property type="evidence" value="ECO:0000314"/>
    <property type="project" value="UniProtKB"/>
</dbReference>
<dbReference type="FunFam" id="3.30.830.10:FF:000013">
    <property type="entry name" value="Mitochondrial presequence protease"/>
    <property type="match status" value="1"/>
</dbReference>
<dbReference type="FunFam" id="3.30.830.10:FF:000020">
    <property type="entry name" value="Mitochondrial presequence protease"/>
    <property type="match status" value="1"/>
</dbReference>
<dbReference type="FunFam" id="3.30.830.10:FF:000009">
    <property type="entry name" value="Presequence protease, mitochondrial"/>
    <property type="match status" value="1"/>
</dbReference>
<dbReference type="FunFam" id="3.30.830.10:FF:000011">
    <property type="entry name" value="Presequence protease, mitochondrial"/>
    <property type="match status" value="1"/>
</dbReference>
<dbReference type="Gene3D" id="3.30.830.10">
    <property type="entry name" value="Metalloenzyme, LuxS/M16 peptidase-like"/>
    <property type="match status" value="4"/>
</dbReference>
<dbReference type="InterPro" id="IPR011249">
    <property type="entry name" value="Metalloenz_LuxS/M16"/>
</dbReference>
<dbReference type="InterPro" id="IPR011765">
    <property type="entry name" value="Pept_M16_N"/>
</dbReference>
<dbReference type="InterPro" id="IPR007863">
    <property type="entry name" value="Peptidase_M16_C"/>
</dbReference>
<dbReference type="InterPro" id="IPR013578">
    <property type="entry name" value="Peptidase_M16C_assoc"/>
</dbReference>
<dbReference type="InterPro" id="IPR055130">
    <property type="entry name" value="PreP_C"/>
</dbReference>
<dbReference type="PANTHER" id="PTHR43016">
    <property type="entry name" value="PRESEQUENCE PROTEASE"/>
    <property type="match status" value="1"/>
</dbReference>
<dbReference type="PANTHER" id="PTHR43016:SF13">
    <property type="entry name" value="PRESEQUENCE PROTEASE, MITOCHONDRIAL"/>
    <property type="match status" value="1"/>
</dbReference>
<dbReference type="Pfam" id="PF08367">
    <property type="entry name" value="M16C_assoc"/>
    <property type="match status" value="1"/>
</dbReference>
<dbReference type="Pfam" id="PF00675">
    <property type="entry name" value="Peptidase_M16"/>
    <property type="match status" value="1"/>
</dbReference>
<dbReference type="Pfam" id="PF05193">
    <property type="entry name" value="Peptidase_M16_C"/>
    <property type="match status" value="1"/>
</dbReference>
<dbReference type="Pfam" id="PF22516">
    <property type="entry name" value="PreP_C"/>
    <property type="match status" value="1"/>
</dbReference>
<dbReference type="SMART" id="SM01264">
    <property type="entry name" value="M16C_associated"/>
    <property type="match status" value="1"/>
</dbReference>
<dbReference type="SUPFAM" id="SSF63411">
    <property type="entry name" value="LuxS/MPP-like metallohydrolase"/>
    <property type="match status" value="4"/>
</dbReference>
<gene>
    <name evidence="23" type="primary">PITRM1</name>
    <name evidence="22" type="synonym">KIAA1104</name>
    <name evidence="16" type="synonym">MP1</name>
    <name evidence="18" type="synonym">PREP</name>
</gene>
<evidence type="ECO:0000250" key="1">
    <source>
        <dbReference type="UniProtKB" id="Q8K411"/>
    </source>
</evidence>
<evidence type="ECO:0000250" key="2">
    <source>
        <dbReference type="UniProtKB" id="Q9LJL3"/>
    </source>
</evidence>
<evidence type="ECO:0000255" key="3"/>
<evidence type="ECO:0000256" key="4">
    <source>
        <dbReference type="SAM" id="MobiDB-lite"/>
    </source>
</evidence>
<evidence type="ECO:0000269" key="5">
    <source>
    </source>
</evidence>
<evidence type="ECO:0000269" key="6">
    <source>
    </source>
</evidence>
<evidence type="ECO:0000269" key="7">
    <source>
    </source>
</evidence>
<evidence type="ECO:0000269" key="8">
    <source>
    </source>
</evidence>
<evidence type="ECO:0000269" key="9">
    <source>
    </source>
</evidence>
<evidence type="ECO:0000269" key="10">
    <source>
    </source>
</evidence>
<evidence type="ECO:0000269" key="11">
    <source>
    </source>
</evidence>
<evidence type="ECO:0000269" key="12">
    <source>
    </source>
</evidence>
<evidence type="ECO:0000269" key="13">
    <source>
    </source>
</evidence>
<evidence type="ECO:0000269" key="14">
    <source>
    </source>
</evidence>
<evidence type="ECO:0000269" key="15">
    <source>
    </source>
</evidence>
<evidence type="ECO:0000303" key="16">
    <source>
    </source>
</evidence>
<evidence type="ECO:0000303" key="17">
    <source>
    </source>
</evidence>
<evidence type="ECO:0000303" key="18">
    <source>
    </source>
</evidence>
<evidence type="ECO:0000305" key="19"/>
<evidence type="ECO:0000305" key="20">
    <source>
    </source>
</evidence>
<evidence type="ECO:0000305" key="21">
    <source>
    </source>
</evidence>
<evidence type="ECO:0000312" key="22">
    <source>
        <dbReference type="EMBL" id="BAA83056.2"/>
    </source>
</evidence>
<evidence type="ECO:0000312" key="23">
    <source>
        <dbReference type="HGNC" id="HGNC:17663"/>
    </source>
</evidence>
<evidence type="ECO:0007744" key="24">
    <source>
        <dbReference type="PDB" id="4L3T"/>
    </source>
</evidence>
<evidence type="ECO:0007744" key="25">
    <source>
        <dbReference type="PDB" id="4NGE"/>
    </source>
</evidence>
<evidence type="ECO:0007744" key="26">
    <source>
    </source>
</evidence>
<evidence type="ECO:0007829" key="27">
    <source>
        <dbReference type="PDB" id="4L3T"/>
    </source>
</evidence>
<evidence type="ECO:0007829" key="28">
    <source>
        <dbReference type="PDB" id="4NGE"/>
    </source>
</evidence>
<evidence type="ECO:0007829" key="29">
    <source>
        <dbReference type="PDB" id="4RPU"/>
    </source>
</evidence>
<evidence type="ECO:0007829" key="30">
    <source>
        <dbReference type="PDB" id="6XOV"/>
    </source>
</evidence>
<name>PREP_HUMAN</name>
<comment type="function">
    <text evidence="5 9 10 12 13 14 15">Metalloendopeptidase of the mitochondrial matrix that functions in peptide cleavage and degradation rather than in protein processing (PubMed:10360838, PubMed:16849325, PubMed:19196155, PubMed:24931469). Has an ATP-independent activity (PubMed:16849325). Specifically cleaves peptides in the range of 5 to 65 residues (PubMed:19196155). Shows a preference for cleavage after small polar residues and before basic residues, but without any positional preference (PubMed:10360838, PubMed:19196155, PubMed:24931469). Degrades the transit peptides of mitochondrial proteins after their cleavage (PubMed:19196155). Also degrades other unstructured peptides (PubMed:19196155). It is also able to degrade amyloid-beta protein 40, one of the peptides produced by APP processing, when it accumulates in mitochondrion (PubMed:16849325, PubMed:24931469, PubMed:26697887). It is a highly efficient protease, at least toward amyloid-beta protein 40 (PubMed:24931469, PubMed:29383861, PubMed:29764912). Cleaves that peptide at a specific position and is probably not processive, releasing digested peptides intermediates that can be further cleaved subsequently (PubMed:24931469). It is also able to degrade amyloid-beta protein 42 (PubMed:29764912).</text>
</comment>
<comment type="cofactor">
    <cofactor evidence="12">
        <name>Zn(2+)</name>
        <dbReference type="ChEBI" id="CHEBI:29105"/>
    </cofactor>
    <text evidence="12">Binds 1 zinc ion per subunit.</text>
</comment>
<comment type="activity regulation">
    <text evidence="5 10 12 20 21">Mainly exists in a closed and catalytically competent conformation but a closed-to-open switch allows substrate entry into the catalytic chamber (PubMed:24931469). Substrate binding induces closure and dimerization (PubMed:24931469). A disulfide bond may lock the enzyme in a closed conformation preventing substrate entry into the catalytic chamber, participating in redox regulation of the enzyme (Probable). Inhibited by metal-chelating agents (PubMed:10360838). Inhibited by nickel and zinc excess, and slightly activated by manganese (PubMed:19196155).</text>
</comment>
<comment type="biophysicochemical properties">
    <kinetics>
        <KM evidence="10">1.07 uM for leumorphin ARG-ARG-GLN-PHE-LYS-VAL-VAL-THR-ARG-SER-GLN peptide (at pH 7.5)</KM>
        <KM evidence="10">0.5 uM for TYR-GLY-GLY-LEU-ARG-ARG-GLY-GLN peptide (at pH 7.5)</KM>
    </kinetics>
    <phDependence>
        <text evidence="5">Optimum pH is 7.7.</text>
    </phDependence>
</comment>
<comment type="subunit">
    <text evidence="12">Monomer and homodimer; homodimerization is induced by binding of the substrate.</text>
</comment>
<comment type="interaction">
    <interactant intactId="EBI-16109799">
        <id>Q5JRX3-1</id>
    </interactant>
    <interactant intactId="EBI-2431589">
        <id>PRO_0000000093</id>
        <label>APP</label>
        <dbReference type="UniProtKB" id="P05067"/>
    </interactant>
    <organismsDiffer>false</organismsDiffer>
    <experiments>3</experiments>
</comment>
<comment type="subcellular location">
    <subcellularLocation>
        <location evidence="13">Mitochondrion</location>
    </subcellularLocation>
    <subcellularLocation>
        <location evidence="9 10 11">Mitochondrion matrix</location>
    </subcellularLocation>
</comment>
<comment type="alternative products">
    <event type="alternative splicing"/>
    <isoform>
        <id>Q5JRX3-1</id>
        <name>1</name>
        <sequence type="displayed"/>
    </isoform>
    <isoform>
        <id>Q5JRX3-2</id>
        <name>2</name>
        <sequence type="described" ref="VSP_020597"/>
    </isoform>
    <isoform>
        <id>Q5JRX3-3</id>
        <name>3</name>
        <sequence type="described" ref="VSP_046494 VSP_046495"/>
    </isoform>
</comment>
<comment type="tissue specificity">
    <text evidence="5">Widely expressed. Expressed at higher level in muscle and heart compared to brain, pancreas, liver, lung and placenta.</text>
</comment>
<comment type="PTM">
    <text evidence="20 21">A disulfide bond locks the enzyme in the closed conformation preventing substrate entry into the catalytic chamber.</text>
</comment>
<comment type="disease" evidence="13 14 15">
    <disease id="DI-06158">
        <name>Spinocerebellar ataxia, autosomal recessive, 30</name>
        <acronym>SCAR30</acronym>
        <description>A form of spinocerebellar ataxia, a clinically and genetically heterogeneous group of cerebellar disorders due to degeneration of the cerebellum with variable involvement of the brainstem and spinal cord. SCAR30 is a progressive disease characterized by childhood-onset global developmental delay with variably impaired intellectual development, motor dysfunction, and cerebellar ataxia. Affected individuals may also have psychiatric abnormalities.</description>
        <dbReference type="MIM" id="619405"/>
    </disease>
    <text>The disease is caused by variants affecting the gene represented in this entry.</text>
</comment>
<comment type="similarity">
    <text evidence="19">Belongs to the peptidase M16 family. PreP subfamily.</text>
</comment>
<comment type="sequence caution" evidence="19">
    <conflict type="erroneous initiation">
        <sequence resource="EMBL-CDS" id="AAH01150"/>
    </conflict>
    <text>Truncated N-terminus.</text>
</comment>
<comment type="sequence caution" evidence="19">
    <conflict type="erroneous gene model prediction">
        <sequence resource="EMBL-CDS" id="CAI39997"/>
    </conflict>
</comment>
<reference key="1">
    <citation type="journal article" date="1999" name="DNA Cell Biol.">
        <title>Cloning, expression, and characterization of human metalloprotease 1: a novel member of the pitrilysin family of metalloendoproteases.</title>
        <authorList>
            <person name="Mzhavia N."/>
            <person name="Berman Y.L."/>
            <person name="Qian Y."/>
            <person name="Yan L."/>
            <person name="Devi L.A."/>
        </authorList>
    </citation>
    <scope>NUCLEOTIDE SEQUENCE [MRNA] (ISOFORM 2)</scope>
    <scope>FUNCTION</scope>
    <scope>CATALYTIC ACTIVITY</scope>
    <scope>ACTIVITY REGULATION</scope>
    <scope>BIOPHYSICOCHEMICAL PROPERTIES</scope>
    <scope>TISSUE SPECIFICITY</scope>
    <scope>VARIANTS SER-169; VAL-328; VAL-397; ILE-621 AND ARG-1037</scope>
</reference>
<reference key="2">
    <citation type="journal article" date="2004" name="Nat. Genet.">
        <title>Complete sequencing and characterization of 21,243 full-length human cDNAs.</title>
        <authorList>
            <person name="Ota T."/>
            <person name="Suzuki Y."/>
            <person name="Nishikawa T."/>
            <person name="Otsuki T."/>
            <person name="Sugiyama T."/>
            <person name="Irie R."/>
            <person name="Wakamatsu A."/>
            <person name="Hayashi K."/>
            <person name="Sato H."/>
            <person name="Nagai K."/>
            <person name="Kimura K."/>
            <person name="Makita H."/>
            <person name="Sekine M."/>
            <person name="Obayashi M."/>
            <person name="Nishi T."/>
            <person name="Shibahara T."/>
            <person name="Tanaka T."/>
            <person name="Ishii S."/>
            <person name="Yamamoto J."/>
            <person name="Saito K."/>
            <person name="Kawai Y."/>
            <person name="Isono Y."/>
            <person name="Nakamura Y."/>
            <person name="Nagahari K."/>
            <person name="Murakami K."/>
            <person name="Yasuda T."/>
            <person name="Iwayanagi T."/>
            <person name="Wagatsuma M."/>
            <person name="Shiratori A."/>
            <person name="Sudo H."/>
            <person name="Hosoiri T."/>
            <person name="Kaku Y."/>
            <person name="Kodaira H."/>
            <person name="Kondo H."/>
            <person name="Sugawara M."/>
            <person name="Takahashi M."/>
            <person name="Kanda K."/>
            <person name="Yokoi T."/>
            <person name="Furuya T."/>
            <person name="Kikkawa E."/>
            <person name="Omura Y."/>
            <person name="Abe K."/>
            <person name="Kamihara K."/>
            <person name="Katsuta N."/>
            <person name="Sato K."/>
            <person name="Tanikawa M."/>
            <person name="Yamazaki M."/>
            <person name="Ninomiya K."/>
            <person name="Ishibashi T."/>
            <person name="Yamashita H."/>
            <person name="Murakawa K."/>
            <person name="Fujimori K."/>
            <person name="Tanai H."/>
            <person name="Kimata M."/>
            <person name="Watanabe M."/>
            <person name="Hiraoka S."/>
            <person name="Chiba Y."/>
            <person name="Ishida S."/>
            <person name="Ono Y."/>
            <person name="Takiguchi S."/>
            <person name="Watanabe S."/>
            <person name="Yosida M."/>
            <person name="Hotuta T."/>
            <person name="Kusano J."/>
            <person name="Kanehori K."/>
            <person name="Takahashi-Fujii A."/>
            <person name="Hara H."/>
            <person name="Tanase T.-O."/>
            <person name="Nomura Y."/>
            <person name="Togiya S."/>
            <person name="Komai F."/>
            <person name="Hara R."/>
            <person name="Takeuchi K."/>
            <person name="Arita M."/>
            <person name="Imose N."/>
            <person name="Musashino K."/>
            <person name="Yuuki H."/>
            <person name="Oshima A."/>
            <person name="Sasaki N."/>
            <person name="Aotsuka S."/>
            <person name="Yoshikawa Y."/>
            <person name="Matsunawa H."/>
            <person name="Ichihara T."/>
            <person name="Shiohata N."/>
            <person name="Sano S."/>
            <person name="Moriya S."/>
            <person name="Momiyama H."/>
            <person name="Satoh N."/>
            <person name="Takami S."/>
            <person name="Terashima Y."/>
            <person name="Suzuki O."/>
            <person name="Nakagawa S."/>
            <person name="Senoh A."/>
            <person name="Mizoguchi H."/>
            <person name="Goto Y."/>
            <person name="Shimizu F."/>
            <person name="Wakebe H."/>
            <person name="Hishigaki H."/>
            <person name="Watanabe T."/>
            <person name="Sugiyama A."/>
            <person name="Takemoto M."/>
            <person name="Kawakami B."/>
            <person name="Yamazaki M."/>
            <person name="Watanabe K."/>
            <person name="Kumagai A."/>
            <person name="Itakura S."/>
            <person name="Fukuzumi Y."/>
            <person name="Fujimori Y."/>
            <person name="Komiyama M."/>
            <person name="Tashiro H."/>
            <person name="Tanigami A."/>
            <person name="Fujiwara T."/>
            <person name="Ono T."/>
            <person name="Yamada K."/>
            <person name="Fujii Y."/>
            <person name="Ozaki K."/>
            <person name="Hirao M."/>
            <person name="Ohmori Y."/>
            <person name="Kawabata A."/>
            <person name="Hikiji T."/>
            <person name="Kobatake N."/>
            <person name="Inagaki H."/>
            <person name="Ikema Y."/>
            <person name="Okamoto S."/>
            <person name="Okitani R."/>
            <person name="Kawakami T."/>
            <person name="Noguchi S."/>
            <person name="Itoh T."/>
            <person name="Shigeta K."/>
            <person name="Senba T."/>
            <person name="Matsumura K."/>
            <person name="Nakajima Y."/>
            <person name="Mizuno T."/>
            <person name="Morinaga M."/>
            <person name="Sasaki M."/>
            <person name="Togashi T."/>
            <person name="Oyama M."/>
            <person name="Hata H."/>
            <person name="Watanabe M."/>
            <person name="Komatsu T."/>
            <person name="Mizushima-Sugano J."/>
            <person name="Satoh T."/>
            <person name="Shirai Y."/>
            <person name="Takahashi Y."/>
            <person name="Nakagawa K."/>
            <person name="Okumura K."/>
            <person name="Nagase T."/>
            <person name="Nomura N."/>
            <person name="Kikuchi H."/>
            <person name="Masuho Y."/>
            <person name="Yamashita R."/>
            <person name="Nakai K."/>
            <person name="Yada T."/>
            <person name="Nakamura Y."/>
            <person name="Ohara O."/>
            <person name="Isogai T."/>
            <person name="Sugano S."/>
        </authorList>
    </citation>
    <scope>NUCLEOTIDE SEQUENCE [LARGE SCALE MRNA] (ISOFORMS 1 AND 3)</scope>
    <scope>VARIANTS VAL-328; VAL-397 AND ARG-1037</scope>
    <source>
        <tissue>Placenta</tissue>
        <tissue>Thymus</tissue>
    </source>
</reference>
<reference key="3">
    <citation type="journal article" date="2004" name="Nature">
        <title>The DNA sequence and comparative analysis of human chromosome 10.</title>
        <authorList>
            <person name="Deloukas P."/>
            <person name="Earthrowl M.E."/>
            <person name="Grafham D.V."/>
            <person name="Rubenfield M."/>
            <person name="French L."/>
            <person name="Steward C.A."/>
            <person name="Sims S.K."/>
            <person name="Jones M.C."/>
            <person name="Searle S."/>
            <person name="Scott C."/>
            <person name="Howe K."/>
            <person name="Hunt S.E."/>
            <person name="Andrews T.D."/>
            <person name="Gilbert J.G.R."/>
            <person name="Swarbreck D."/>
            <person name="Ashurst J.L."/>
            <person name="Taylor A."/>
            <person name="Battles J."/>
            <person name="Bird C.P."/>
            <person name="Ainscough R."/>
            <person name="Almeida J.P."/>
            <person name="Ashwell R.I.S."/>
            <person name="Ambrose K.D."/>
            <person name="Babbage A.K."/>
            <person name="Bagguley C.L."/>
            <person name="Bailey J."/>
            <person name="Banerjee R."/>
            <person name="Bates K."/>
            <person name="Beasley H."/>
            <person name="Bray-Allen S."/>
            <person name="Brown A.J."/>
            <person name="Brown J.Y."/>
            <person name="Burford D.C."/>
            <person name="Burrill W."/>
            <person name="Burton J."/>
            <person name="Cahill P."/>
            <person name="Camire D."/>
            <person name="Carter N.P."/>
            <person name="Chapman J.C."/>
            <person name="Clark S.Y."/>
            <person name="Clarke G."/>
            <person name="Clee C.M."/>
            <person name="Clegg S."/>
            <person name="Corby N."/>
            <person name="Coulson A."/>
            <person name="Dhami P."/>
            <person name="Dutta I."/>
            <person name="Dunn M."/>
            <person name="Faulkner L."/>
            <person name="Frankish A."/>
            <person name="Frankland J.A."/>
            <person name="Garner P."/>
            <person name="Garnett J."/>
            <person name="Gribble S."/>
            <person name="Griffiths C."/>
            <person name="Grocock R."/>
            <person name="Gustafson E."/>
            <person name="Hammond S."/>
            <person name="Harley J.L."/>
            <person name="Hart E."/>
            <person name="Heath P.D."/>
            <person name="Ho T.P."/>
            <person name="Hopkins B."/>
            <person name="Horne J."/>
            <person name="Howden P.J."/>
            <person name="Huckle E."/>
            <person name="Hynds C."/>
            <person name="Johnson C."/>
            <person name="Johnson D."/>
            <person name="Kana A."/>
            <person name="Kay M."/>
            <person name="Kimberley A.M."/>
            <person name="Kershaw J.K."/>
            <person name="Kokkinaki M."/>
            <person name="Laird G.K."/>
            <person name="Lawlor S."/>
            <person name="Lee H.M."/>
            <person name="Leongamornlert D.A."/>
            <person name="Laird G."/>
            <person name="Lloyd C."/>
            <person name="Lloyd D.M."/>
            <person name="Loveland J."/>
            <person name="Lovell J."/>
            <person name="McLaren S."/>
            <person name="McLay K.E."/>
            <person name="McMurray A."/>
            <person name="Mashreghi-Mohammadi M."/>
            <person name="Matthews L."/>
            <person name="Milne S."/>
            <person name="Nickerson T."/>
            <person name="Nguyen M."/>
            <person name="Overton-Larty E."/>
            <person name="Palmer S.A."/>
            <person name="Pearce A.V."/>
            <person name="Peck A.I."/>
            <person name="Pelan S."/>
            <person name="Phillimore B."/>
            <person name="Porter K."/>
            <person name="Rice C.M."/>
            <person name="Rogosin A."/>
            <person name="Ross M.T."/>
            <person name="Sarafidou T."/>
            <person name="Sehra H.K."/>
            <person name="Shownkeen R."/>
            <person name="Skuce C.D."/>
            <person name="Smith M."/>
            <person name="Standring L."/>
            <person name="Sycamore N."/>
            <person name="Tester J."/>
            <person name="Thorpe A."/>
            <person name="Torcasso W."/>
            <person name="Tracey A."/>
            <person name="Tromans A."/>
            <person name="Tsolas J."/>
            <person name="Wall M."/>
            <person name="Walsh J."/>
            <person name="Wang H."/>
            <person name="Weinstock K."/>
            <person name="West A.P."/>
            <person name="Willey D.L."/>
            <person name="Whitehead S.L."/>
            <person name="Wilming L."/>
            <person name="Wray P.W."/>
            <person name="Young L."/>
            <person name="Chen Y."/>
            <person name="Lovering R.C."/>
            <person name="Moschonas N.K."/>
            <person name="Siebert R."/>
            <person name="Fechtel K."/>
            <person name="Bentley D."/>
            <person name="Durbin R.M."/>
            <person name="Hubbard T."/>
            <person name="Doucette-Stamm L."/>
            <person name="Beck S."/>
            <person name="Smith D.R."/>
            <person name="Rogers J."/>
        </authorList>
    </citation>
    <scope>NUCLEOTIDE SEQUENCE [LARGE SCALE GENOMIC DNA]</scope>
</reference>
<reference key="4">
    <citation type="journal article" date="2004" name="Genome Res.">
        <title>The status, quality, and expansion of the NIH full-length cDNA project: the Mammalian Gene Collection (MGC).</title>
        <authorList>
            <consortium name="The MGC Project Team"/>
        </authorList>
    </citation>
    <scope>NUCLEOTIDE SEQUENCE [LARGE SCALE MRNA] (ISOFORM 1)</scope>
    <scope>VARIANTS ARG-8; VAL-145; VAL-328; VAL-397; ILE-963 AND ARG-1037</scope>
    <source>
        <tissue>Brain</tissue>
        <tissue>Lung</tissue>
        <tissue>Testis</tissue>
    </source>
</reference>
<reference key="5">
    <citation type="journal article" date="1999" name="DNA Res.">
        <title>Prediction of the coding sequences of unidentified human genes. XIV. The complete sequences of 100 new cDNA clones from brain which code for large proteins in vitro.</title>
        <authorList>
            <person name="Kikuno R."/>
            <person name="Nagase T."/>
            <person name="Ishikawa K."/>
            <person name="Hirosawa M."/>
            <person name="Miyajima N."/>
            <person name="Tanaka A."/>
            <person name="Kotani H."/>
            <person name="Nomura N."/>
            <person name="Ohara O."/>
        </authorList>
    </citation>
    <scope>NUCLEOTIDE SEQUENCE [LARGE SCALE MRNA] OF 402-1037 (ISOFORM 1)</scope>
    <scope>VARIANT ARG-1037</scope>
    <source>
        <tissue>Brain</tissue>
    </source>
</reference>
<reference key="6">
    <citation type="journal article" date="2006" name="J. Biol. Chem.">
        <title>Degradation of the amyloid beta-protein by the novel mitochondrial peptidasome, PreP.</title>
        <authorList>
            <person name="Falkevall A."/>
            <person name="Alikhani N."/>
            <person name="Bhushan S."/>
            <person name="Pavlov P.F."/>
            <person name="Busch K."/>
            <person name="Johnson K.A."/>
            <person name="Eneqvist T."/>
            <person name="Tjernberg L."/>
            <person name="Ankarcrona M."/>
            <person name="Glaser E."/>
        </authorList>
    </citation>
    <scope>FUNCTION</scope>
    <scope>CATALYTIC ACTIVITY</scope>
    <scope>ACTIVITY REGULATION</scope>
    <scope>SUBCELLULAR LOCATION</scope>
    <scope>ACTIVE SITE</scope>
    <scope>DISULFIDE BOND</scope>
    <scope>MUTAGENESIS OF GLU-107 AND CYS-119</scope>
</reference>
<reference key="7">
    <citation type="journal article" date="2009" name="Biochemistry">
        <title>Mammalian pitrilysin: substrate specificity and mitochondrial targeting.</title>
        <authorList>
            <person name="Chow K.M."/>
            <person name="Gakh O."/>
            <person name="Payne I.C."/>
            <person name="Juliano M.A."/>
            <person name="Juliano L."/>
            <person name="Isaya G."/>
            <person name="Hersh L.B."/>
        </authorList>
    </citation>
    <scope>FUNCTION</scope>
    <scope>CATALYTIC ACTIVITY</scope>
    <scope>ACTIVITY REGULATION</scope>
    <scope>BIOPHYSICOCHEMICAL PROPERTIES</scope>
    <scope>SUBCELLULAR LOCATION</scope>
    <scope>MUTAGENESIS OF 1-MET--ARG-15</scope>
</reference>
<reference key="8">
    <citation type="journal article" date="2011" name="BMC Syst. Biol.">
        <title>Initial characterization of the human central proteome.</title>
        <authorList>
            <person name="Burkard T.R."/>
            <person name="Planyavsky M."/>
            <person name="Kaupe I."/>
            <person name="Breitwieser F.P."/>
            <person name="Buerckstuemmer T."/>
            <person name="Bennett K.L."/>
            <person name="Superti-Furga G."/>
            <person name="Colinge J."/>
        </authorList>
    </citation>
    <scope>IDENTIFICATION BY MASS SPECTROMETRY [LARGE SCALE ANALYSIS]</scope>
</reference>
<reference key="9">
    <citation type="journal article" date="2011" name="J. Mol. Biol.">
        <title>Targeting capacity and conservation of PreP homologues localization in mitochondria of different species.</title>
        <authorList>
            <person name="Alikhani N."/>
            <person name="Berglund A.K."/>
            <person name="Engmann T."/>
            <person name="Spaanning E."/>
            <person name="Voegtle F.N."/>
            <person name="Pavlov P."/>
            <person name="Meisinger C."/>
            <person name="Langer T."/>
            <person name="Glaser E."/>
        </authorList>
    </citation>
    <scope>SUBCELLULAR LOCATION</scope>
</reference>
<reference key="10">
    <citation type="journal article" date="2014" name="J. Proteomics">
        <title>An enzyme assisted RP-RPLC approach for in-depth analysis of human liver phosphoproteome.</title>
        <authorList>
            <person name="Bian Y."/>
            <person name="Song C."/>
            <person name="Cheng K."/>
            <person name="Dong M."/>
            <person name="Wang F."/>
            <person name="Huang J."/>
            <person name="Sun D."/>
            <person name="Wang L."/>
            <person name="Ye M."/>
            <person name="Zou H."/>
        </authorList>
    </citation>
    <scope>IDENTIFICATION BY MASS SPECTROMETRY [LARGE SCALE ANALYSIS]</scope>
    <source>
        <tissue>Liver</tissue>
    </source>
</reference>
<reference evidence="24 25" key="11">
    <citation type="journal article" date="2014" name="Structure">
        <title>Molecular basis of substrate recognition and degradation by human presequence protease.</title>
        <authorList>
            <person name="King J.V."/>
            <person name="Liang W.G."/>
            <person name="Scherpelz K.P."/>
            <person name="Schilling A.B."/>
            <person name="Meredith S.C."/>
            <person name="Tang W.J."/>
        </authorList>
    </citation>
    <scope>X-RAY CRYSTALLOGRAPHY (2.03 ANGSTROMS) OF 33-1037 (ISOFORM 1) OF MUTANT GLN-107 IN COMPLEX WITH AMYLOID-BETA PROTEIN 40 AND ZINC</scope>
    <scope>FUNCTION</scope>
    <scope>CATALYTIC ACTIVITY</scope>
    <scope>SUBUNIT</scope>
    <scope>ACTIVE SITE</scope>
    <scope>MUTAGENESIS OF GLU-107; LEU-557 AND PRO-558</scope>
</reference>
<reference key="12">
    <citation type="journal article" date="2015" name="Proteomics">
        <title>N-terminome analysis of the human mitochondrial proteome.</title>
        <authorList>
            <person name="Vaca Jacome A.S."/>
            <person name="Rabilloud T."/>
            <person name="Schaeffer-Reiss C."/>
            <person name="Rompais M."/>
            <person name="Ayoub D."/>
            <person name="Lane L."/>
            <person name="Bairoch A."/>
            <person name="Van Dorsselaer A."/>
            <person name="Carapito C."/>
        </authorList>
    </citation>
    <scope>VARIANT [LARGE SCALE ANALYSIS] ARG-1037</scope>
    <scope>IDENTIFICATION BY MASS SPECTROMETRY [LARGE SCALE ANALYSIS]</scope>
</reference>
<reference key="13">
    <citation type="journal article" date="2016" name="EMBO Mol. Med.">
        <title>Defective PITRM1 mitochondrial peptidase is associated with Abeta amyloidotic neurodegeneration.</title>
        <authorList>
            <person name="Brunetti D."/>
            <person name="Torsvik J."/>
            <person name="Dallabona C."/>
            <person name="Teixeira P."/>
            <person name="Sztromwasser P."/>
            <person name="Fernandez-Vizarra E."/>
            <person name="Cerutti R."/>
            <person name="Reyes A."/>
            <person name="Preziuso C."/>
            <person name="D'Amati G."/>
            <person name="Baruffini E."/>
            <person name="Goffrini P."/>
            <person name="Viscomi C."/>
            <person name="Ferrero I."/>
            <person name="Boman H."/>
            <person name="Telstad W."/>
            <person name="Johansson S."/>
            <person name="Glaser E."/>
            <person name="Knappskog P.M."/>
            <person name="Zeviani M."/>
            <person name="Bindoff L.A."/>
        </authorList>
    </citation>
    <scope>VARIANT SCAR30 GLN-183</scope>
    <scope>INVOLVEMENT IN SCAR30</scope>
    <scope>CHARACTERIZATION OF VARIANT SCAR30 GLN-183</scope>
    <scope>FUNCTION</scope>
    <scope>SUBCELLULAR LOCATION</scope>
</reference>
<reference key="14">
    <citation type="journal article" date="2018" name="J. Med. Genet.">
        <title>Mitochondrial PITRM1 peptidase loss-of-function in childhood cerebellar atrophy.</title>
        <authorList>
            <person name="Langer Y."/>
            <person name="Aran A."/>
            <person name="Gulsuner S."/>
            <person name="Abu Libdeh B."/>
            <person name="Renbaum P."/>
            <person name="Brunetti D."/>
            <person name="Teixeira P.F."/>
            <person name="Walsh T."/>
            <person name="Zeligson S."/>
            <person name="Ruotolo R."/>
            <person name="Beeri R."/>
            <person name="Dweikat I."/>
            <person name="Shahrour M."/>
            <person name="Weinberg-Shukron A."/>
            <person name="Zahdeh F."/>
            <person name="Baruffini E."/>
            <person name="Glaser E."/>
            <person name="King M.C."/>
            <person name="Levy-Lahad E."/>
            <person name="Zeviani M."/>
            <person name="Segel R."/>
        </authorList>
    </citation>
    <scope>VARIANT SCAR30 MET-931</scope>
    <scope>CHARACTERIZATION OF VARIANT SCAR30 MET-931</scope>
    <scope>FUNCTION</scope>
</reference>
<reference key="15">
    <citation type="journal article" date="2018" name="Protein Sci.">
        <title>Functional requirement for human pitrilysin metallopeptidase 1 arginine 183, mutated in amyloidogenic neuropathy.</title>
        <authorList>
            <person name="Smith-Carpenter J.E."/>
            <person name="Alper B.J."/>
        </authorList>
    </citation>
    <scope>VARIANT SCAR30 GLN-183</scope>
    <scope>CHARACTERIZATION OF VARIANT SCAR30 GLN-183</scope>
    <scope>MUTAGENESIS OF GLU-107; 182-TRP--LYS-199; ARG-183; GLU-185 AND LYS-199</scope>
    <scope>FUNCTION</scope>
</reference>
<organism>
    <name type="scientific">Homo sapiens</name>
    <name type="common">Human</name>
    <dbReference type="NCBI Taxonomy" id="9606"/>
    <lineage>
        <taxon>Eukaryota</taxon>
        <taxon>Metazoa</taxon>
        <taxon>Chordata</taxon>
        <taxon>Craniata</taxon>
        <taxon>Vertebrata</taxon>
        <taxon>Euteleostomi</taxon>
        <taxon>Mammalia</taxon>
        <taxon>Eutheria</taxon>
        <taxon>Euarchontoglires</taxon>
        <taxon>Primates</taxon>
        <taxon>Haplorrhini</taxon>
        <taxon>Catarrhini</taxon>
        <taxon>Hominidae</taxon>
        <taxon>Homo</taxon>
    </lineage>
</organism>
<accession>Q5JRX3</accession>
<accession>B3KMJ6</accession>
<accession>B4E0J8</accession>
<accession>C9JSL2</accession>
<accession>E7ES23</accession>
<accession>O95204</accession>
<accession>Q2M2G6</accession>
<accession>Q4VBR1</accession>
<accession>Q5JRW7</accession>
<accession>Q7L5Z7</accession>
<accession>Q9BSI6</accession>
<accession>Q9BVJ5</accession>
<accession>Q9UPP8</accession>
<protein>
    <recommendedName>
        <fullName evidence="20">Presequence protease, mitochondrial</fullName>
        <shortName evidence="18">hPreP</shortName>
        <ecNumber evidence="5 9 10 12">3.4.24.-</ecNumber>
    </recommendedName>
    <alternativeName>
        <fullName evidence="16">Pitrilysin metalloproteinase 1</fullName>
        <shortName evidence="16">Metalloprotease 1</shortName>
        <shortName evidence="16">hMP1</shortName>
    </alternativeName>
</protein>
<feature type="transit peptide" description="Mitochondrion" evidence="3">
    <location>
        <begin position="1"/>
        <end position="28"/>
    </location>
</feature>
<feature type="chain" id="PRO_0000249931" description="Presequence protease, mitochondrial">
    <location>
        <begin position="29"/>
        <end position="1037"/>
    </location>
</feature>
<feature type="region of interest" description="Disordered" evidence="4">
    <location>
        <begin position="804"/>
        <end position="834"/>
    </location>
</feature>
<feature type="compositionally biased region" description="Basic residues" evidence="4">
    <location>
        <begin position="804"/>
        <end position="814"/>
    </location>
</feature>
<feature type="active site" description="Proton acceptor" evidence="9 12">
    <location>
        <position position="107"/>
    </location>
</feature>
<feature type="active site" evidence="2">
    <location>
        <position position="180"/>
    </location>
</feature>
<feature type="binding site" evidence="12 24 25">
    <location>
        <position position="104"/>
    </location>
    <ligand>
        <name>Zn(2+)</name>
        <dbReference type="ChEBI" id="CHEBI:29105"/>
        <note>catalytic</note>
    </ligand>
</feature>
<feature type="binding site" evidence="12 24 25">
    <location>
        <position position="108"/>
    </location>
    <ligand>
        <name>Zn(2+)</name>
        <dbReference type="ChEBI" id="CHEBI:29105"/>
        <note>catalytic</note>
    </ligand>
</feature>
<feature type="binding site" evidence="12 24 25">
    <location>
        <position position="205"/>
    </location>
    <ligand>
        <name>Zn(2+)</name>
        <dbReference type="ChEBI" id="CHEBI:29105"/>
        <note>catalytic</note>
    </ligand>
</feature>
<feature type="modified residue" description="N6-acetyllysine" evidence="1">
    <location>
        <position position="759"/>
    </location>
</feature>
<feature type="modified residue" description="N6-acetyllysine; alternate" evidence="1">
    <location>
        <position position="770"/>
    </location>
</feature>
<feature type="modified residue" description="N6-succinyllysine; alternate" evidence="1">
    <location>
        <position position="770"/>
    </location>
</feature>
<feature type="modified residue" description="N6-succinyllysine" evidence="1">
    <location>
        <position position="849"/>
    </location>
</feature>
<feature type="modified residue" description="N6-acetyllysine" evidence="1">
    <location>
        <position position="884"/>
    </location>
</feature>
<feature type="modified residue" description="N6-succinyllysine" evidence="1">
    <location>
        <position position="946"/>
    </location>
</feature>
<feature type="disulfide bond" evidence="20">
    <location>
        <begin position="119"/>
        <end position="556"/>
    </location>
</feature>
<feature type="splice variant" id="VSP_046494" description="In isoform 3." evidence="17">
    <original>MWRCGGRQGLCVLRRLSGGHAHHRAWRWNSNRACERALQYKLGDKIHGFTVNQ</original>
    <variation>MRNVALRRAAGPVCAEAAERR</variation>
    <location>
        <begin position="1"/>
        <end position="53"/>
    </location>
</feature>
<feature type="splice variant" id="VSP_046495" description="In isoform 3." evidence="17">
    <location>
        <begin position="624"/>
        <end position="689"/>
    </location>
</feature>
<feature type="splice variant" id="VSP_020597" description="In isoform 2." evidence="16">
    <original>Q</original>
    <variation>QV</variation>
    <location>
        <position position="664"/>
    </location>
</feature>
<feature type="sequence variant" id="VAR_027517" description="In dbSNP:rs11818724." evidence="8">
    <original>Q</original>
    <variation>R</variation>
    <location>
        <position position="8"/>
    </location>
</feature>
<feature type="sequence variant" id="VAR_027518" description="In dbSNP:rs9423502." evidence="8">
    <original>L</original>
    <variation>V</variation>
    <location>
        <position position="145"/>
    </location>
</feature>
<feature type="sequence variant" id="VAR_027519" description="In dbSNP:rs3814596." evidence="5">
    <original>F</original>
    <variation>S</variation>
    <location>
        <position position="169"/>
    </location>
</feature>
<feature type="sequence variant" id="VAR_085987" description="In SCAR30; decreased function in degradation of amyloid-beta protein 40; decreased metalloendopeptidase activity towards different substrates including an amyloid-beta peptide derivative; decreased protein levels in patient tissues; no effect on mitochondrial localization; dbSNP:rs1249144069." evidence="13 14">
    <original>R</original>
    <variation>Q</variation>
    <location>
        <position position="183"/>
    </location>
</feature>
<feature type="sequence variant" id="VAR_027520" description="In dbSNP:rs4242746." evidence="5 7 8">
    <original>I</original>
    <variation>V</variation>
    <location>
        <position position="328"/>
    </location>
</feature>
<feature type="sequence variant" id="VAR_027521" description="In dbSNP:rs3182535." evidence="5 7 8">
    <original>A</original>
    <variation>V</variation>
    <location>
        <position position="397"/>
    </location>
</feature>
<feature type="sequence variant" id="VAR_027522" description="In dbSNP:rs3765101.">
    <original>Q</original>
    <variation>H</variation>
    <location>
        <position position="516"/>
    </location>
</feature>
<feature type="sequence variant" id="VAR_057059" description="In dbSNP:rs12248937.">
    <original>A</original>
    <variation>D</variation>
    <location>
        <position position="554"/>
    </location>
</feature>
<feature type="sequence variant" id="VAR_027523" description="In dbSNP:rs2388556." evidence="5">
    <original>V</original>
    <variation>I</variation>
    <location>
        <position position="621"/>
    </location>
</feature>
<feature type="sequence variant" id="VAR_057060" description="In dbSNP:rs34837384.">
    <original>R</original>
    <variation>Q</variation>
    <location>
        <position position="805"/>
    </location>
</feature>
<feature type="sequence variant" id="VAR_085988" description="In SCAR30; strongly decreased metalloendopeptidase activity towards amyloid-beta protein 40 and amyloid-beta protein 42; dbSNP:rs187308159." evidence="15">
    <original>T</original>
    <variation>M</variation>
    <location>
        <position position="931"/>
    </location>
</feature>
<feature type="sequence variant" id="VAR_027524" description="In dbSNP:rs2279219.">
    <original>I</original>
    <variation>M</variation>
    <location>
        <position position="952"/>
    </location>
</feature>
<feature type="sequence variant" id="VAR_027525" description="In dbSNP:rs17849904." evidence="8">
    <original>V</original>
    <variation>I</variation>
    <location>
        <position position="963"/>
    </location>
</feature>
<feature type="sequence variant" id="VAR_027526" description="In dbSNP:rs2279218.">
    <original>P</original>
    <variation>L</variation>
    <location>
        <position position="969"/>
    </location>
</feature>
<feature type="sequence variant" id="VAR_027527" description="In dbSNP:rs6901." evidence="5 6 7 8 26">
    <original>Q</original>
    <variation>R</variation>
    <location>
        <position position="1037"/>
    </location>
</feature>
<feature type="mutagenesis site" description="Loss of localization to the mitochondrion." evidence="10">
    <location>
        <begin position="1"/>
        <end position="15"/>
    </location>
</feature>
<feature type="mutagenesis site" description="Loss of metalloendopeptidase activity. Loss of activity towards an amyloid-beta peptide derivative." evidence="9 12 14">
    <original>E</original>
    <variation>Q</variation>
    <location>
        <position position="107"/>
    </location>
</feature>
<feature type="mutagenesis site" description="No loss of metalloendopeptidase activity under oxidizing conditions." evidence="9">
    <original>C</original>
    <variation>S</variation>
    <location>
        <position position="119"/>
    </location>
</feature>
<feature type="mutagenesis site" description="Loss of metalloendopeptidase activity towards an amyloid-beta peptide derivative." evidence="14">
    <location>
        <begin position="182"/>
        <end position="199"/>
    </location>
</feature>
<feature type="mutagenesis site" description="Decreased metalloendopeptidase activity towards an amyloid-beta peptide derivative." evidence="14">
    <original>R</original>
    <variation>A</variation>
    <variation>K</variation>
    <variation>N</variation>
    <location>
        <position position="183"/>
    </location>
</feature>
<feature type="mutagenesis site" description="Loss of metalloendopeptidase activity towards an amyloid-beta peptide derivative." evidence="14">
    <original>R</original>
    <variation>D</variation>
    <variation>E</variation>
    <location>
        <position position="183"/>
    </location>
</feature>
<feature type="mutagenesis site" description="Loss of metalloendopeptidase activity towards an amyloid-beta peptide derivative." evidence="14">
    <original>E</original>
    <variation>A</variation>
    <location>
        <position position="185"/>
    </location>
</feature>
<feature type="mutagenesis site" description="No effect on metalloendopeptidase activity towards an amyloid-beta peptide derivative." evidence="14">
    <original>E</original>
    <variation>D</variation>
    <variation>Q</variation>
    <location>
        <position position="185"/>
    </location>
</feature>
<feature type="mutagenesis site" description="Decreased metalloendopeptidase activity towards an amyloid-beta peptide derivative." evidence="14">
    <original>E</original>
    <variation>R</variation>
    <variation>K</variation>
    <variation>N</variation>
    <location>
        <position position="185"/>
    </location>
</feature>
<feature type="mutagenesis site" description="Decreased metalloendopeptidase activity towards an amyloid-beta peptide derivative." evidence="14">
    <original>K</original>
    <variation>A</variation>
    <variation>D</variation>
    <variation>E</variation>
    <variation>Q</variation>
    <location>
        <position position="199"/>
    </location>
</feature>
<feature type="mutagenesis site" description="No effect on metalloendopeptidase activity towards an amyloid-beta peptide derivative." evidence="14">
    <original>K</original>
    <variation>N</variation>
    <variation>R</variation>
    <location>
        <position position="199"/>
    </location>
</feature>
<feature type="mutagenesis site" description="Decreased metalloendopeptidase activity without effect on protein stability." evidence="12">
    <original>L</original>
    <variation>E</variation>
    <location>
        <position position="557"/>
    </location>
</feature>
<feature type="mutagenesis site" description="Decreased metalloendopeptidase activity without effect on protein stability." evidence="12">
    <original>P</original>
    <variation>G</variation>
    <location>
        <position position="558"/>
    </location>
</feature>
<feature type="sequence conflict" description="In Ref. 1; AAC67244." evidence="19" ref="1">
    <original>D</original>
    <variation>N</variation>
    <location>
        <position position="121"/>
    </location>
</feature>
<feature type="sequence conflict" description="In Ref. 3; CAI40001." evidence="19" ref="3">
    <original>T</original>
    <variation>V</variation>
    <location>
        <position position="211"/>
    </location>
</feature>
<feature type="sequence conflict" description="In Ref. 3; CAI40001." evidence="19" ref="3">
    <original>D</original>
    <variation>N</variation>
    <location>
        <position position="212"/>
    </location>
</feature>
<feature type="sequence conflict" description="In Ref. 1; AAC67244." evidence="19" ref="1">
    <original>D</original>
    <variation>E</variation>
    <location>
        <position position="373"/>
    </location>
</feature>
<feature type="sequence conflict" description="In Ref. 1; AAC67244." evidence="19" ref="1">
    <original>KGF</original>
    <variation>TRI</variation>
    <location>
        <begin position="418"/>
        <end position="420"/>
    </location>
</feature>
<feature type="sequence conflict" description="In Ref. 4; AAH95422." evidence="19" ref="4">
    <original>LK</original>
    <variation>FE</variation>
    <location>
        <begin position="883"/>
        <end position="884"/>
    </location>
</feature>
<feature type="helix" evidence="27">
    <location>
        <begin position="33"/>
        <end position="37"/>
    </location>
</feature>
<feature type="strand" evidence="27">
    <location>
        <begin position="49"/>
        <end position="57"/>
    </location>
</feature>
<feature type="helix" evidence="27">
    <location>
        <begin position="58"/>
        <end position="60"/>
    </location>
</feature>
<feature type="strand" evidence="27">
    <location>
        <begin position="62"/>
        <end position="69"/>
    </location>
</feature>
<feature type="turn" evidence="27">
    <location>
        <begin position="70"/>
        <end position="72"/>
    </location>
</feature>
<feature type="strand" evidence="27">
    <location>
        <begin position="75"/>
        <end position="80"/>
    </location>
</feature>
<feature type="strand" evidence="27">
    <location>
        <begin position="84"/>
        <end position="93"/>
    </location>
</feature>
<feature type="strand" evidence="27">
    <location>
        <begin position="97"/>
        <end position="100"/>
    </location>
</feature>
<feature type="helix" evidence="27">
    <location>
        <begin position="102"/>
        <end position="109"/>
    </location>
</feature>
<feature type="helix" evidence="27">
    <location>
        <begin position="110"/>
        <end position="112"/>
    </location>
</feature>
<feature type="strand" evidence="28">
    <location>
        <begin position="114"/>
        <end position="116"/>
    </location>
</feature>
<feature type="helix" evidence="27">
    <location>
        <begin position="122"/>
        <end position="127"/>
    </location>
</feature>
<feature type="strand" evidence="27">
    <location>
        <begin position="133"/>
        <end position="135"/>
    </location>
</feature>
<feature type="strand" evidence="30">
    <location>
        <begin position="138"/>
        <end position="140"/>
    </location>
</feature>
<feature type="strand" evidence="27">
    <location>
        <begin position="141"/>
        <end position="151"/>
    </location>
</feature>
<feature type="helix" evidence="27">
    <location>
        <begin position="156"/>
        <end position="168"/>
    </location>
</feature>
<feature type="helix" evidence="27">
    <location>
        <begin position="174"/>
        <end position="180"/>
    </location>
</feature>
<feature type="strand" evidence="27">
    <location>
        <begin position="183"/>
        <end position="188"/>
    </location>
</feature>
<feature type="strand" evidence="29">
    <location>
        <begin position="192"/>
        <end position="194"/>
    </location>
</feature>
<feature type="strand" evidence="27">
    <location>
        <begin position="196"/>
        <end position="199"/>
    </location>
</feature>
<feature type="helix" evidence="27">
    <location>
        <begin position="201"/>
        <end position="209"/>
    </location>
</feature>
<feature type="helix" evidence="27">
    <location>
        <begin position="213"/>
        <end position="225"/>
    </location>
</feature>
<feature type="helix" evidence="27">
    <location>
        <begin position="230"/>
        <end position="232"/>
    </location>
</feature>
<feature type="turn" evidence="27">
    <location>
        <begin position="239"/>
        <end position="241"/>
    </location>
</feature>
<feature type="helix" evidence="27">
    <location>
        <begin position="242"/>
        <end position="244"/>
    </location>
</feature>
<feature type="helix" evidence="27">
    <location>
        <begin position="247"/>
        <end position="250"/>
    </location>
</feature>
<feature type="helix" evidence="27">
    <location>
        <begin position="253"/>
        <end position="257"/>
    </location>
</feature>
<feature type="helix" evidence="27">
    <location>
        <begin position="260"/>
        <end position="262"/>
    </location>
</feature>
<feature type="strand" evidence="27">
    <location>
        <begin position="263"/>
        <end position="271"/>
    </location>
</feature>
<feature type="helix" evidence="27">
    <location>
        <begin position="273"/>
        <end position="277"/>
    </location>
</feature>
<feature type="helix" evidence="27">
    <location>
        <begin position="280"/>
        <end position="283"/>
    </location>
</feature>
<feature type="turn" evidence="27">
    <location>
        <begin position="284"/>
        <end position="286"/>
    </location>
</feature>
<feature type="strand" evidence="27">
    <location>
        <begin position="307"/>
        <end position="313"/>
    </location>
</feature>
<feature type="strand" evidence="30">
    <location>
        <begin position="317"/>
        <end position="319"/>
    </location>
</feature>
<feature type="helix" evidence="29">
    <location>
        <begin position="322"/>
        <end position="324"/>
    </location>
</feature>
<feature type="strand" evidence="27">
    <location>
        <begin position="326"/>
        <end position="336"/>
    </location>
</feature>
<feature type="helix" evidence="27">
    <location>
        <begin position="340"/>
        <end position="354"/>
    </location>
</feature>
<feature type="turn" evidence="27">
    <location>
        <begin position="360"/>
        <end position="362"/>
    </location>
</feature>
<feature type="turn" evidence="27">
    <location>
        <begin position="366"/>
        <end position="369"/>
    </location>
</feature>
<feature type="strand" evidence="27">
    <location>
        <begin position="370"/>
        <end position="374"/>
    </location>
</feature>
<feature type="strand" evidence="27">
    <location>
        <begin position="379"/>
        <end position="381"/>
    </location>
</feature>
<feature type="strand" evidence="27">
    <location>
        <begin position="383"/>
        <end position="396"/>
    </location>
</feature>
<feature type="helix" evidence="27">
    <location>
        <begin position="398"/>
        <end position="400"/>
    </location>
</feature>
<feature type="helix" evidence="27">
    <location>
        <begin position="401"/>
        <end position="418"/>
    </location>
</feature>
<feature type="helix" evidence="27">
    <location>
        <begin position="422"/>
        <end position="430"/>
    </location>
</feature>
<feature type="helix" evidence="27">
    <location>
        <begin position="433"/>
        <end position="437"/>
    </location>
</feature>
<feature type="helix" evidence="27">
    <location>
        <begin position="443"/>
        <end position="456"/>
    </location>
</feature>
<feature type="helix" evidence="27">
    <location>
        <begin position="461"/>
        <end position="465"/>
    </location>
</feature>
<feature type="helix" evidence="27">
    <location>
        <begin position="468"/>
        <end position="480"/>
    </location>
</feature>
<feature type="helix" evidence="27">
    <location>
        <begin position="484"/>
        <end position="487"/>
    </location>
</feature>
<feature type="helix" evidence="27">
    <location>
        <begin position="490"/>
        <end position="494"/>
    </location>
</feature>
<feature type="strand" evidence="27">
    <location>
        <begin position="499"/>
        <end position="506"/>
    </location>
</feature>
<feature type="turn" evidence="27">
    <location>
        <begin position="508"/>
        <end position="512"/>
    </location>
</feature>
<feature type="helix" evidence="27">
    <location>
        <begin position="515"/>
        <end position="520"/>
    </location>
</feature>
<feature type="helix" evidence="27">
    <location>
        <begin position="523"/>
        <end position="527"/>
    </location>
</feature>
<feature type="helix" evidence="27">
    <location>
        <begin position="531"/>
        <end position="539"/>
    </location>
</feature>
<feature type="helix" evidence="27">
    <location>
        <begin position="542"/>
        <end position="549"/>
    </location>
</feature>
<feature type="helix" evidence="27">
    <location>
        <begin position="562"/>
        <end position="564"/>
    </location>
</feature>
<feature type="strand" evidence="27">
    <location>
        <begin position="575"/>
        <end position="579"/>
    </location>
</feature>
<feature type="turn" evidence="27">
    <location>
        <begin position="580"/>
        <end position="582"/>
    </location>
</feature>
<feature type="strand" evidence="27">
    <location>
        <begin position="583"/>
        <end position="589"/>
    </location>
</feature>
<feature type="strand" evidence="27">
    <location>
        <begin position="593"/>
        <end position="603"/>
    </location>
</feature>
<feature type="helix" evidence="27">
    <location>
        <begin position="609"/>
        <end position="614"/>
    </location>
</feature>
<feature type="helix" evidence="27">
    <location>
        <begin position="615"/>
        <end position="621"/>
    </location>
</feature>
<feature type="turn" evidence="27">
    <location>
        <begin position="622"/>
        <end position="624"/>
    </location>
</feature>
<feature type="helix" evidence="27">
    <location>
        <begin position="632"/>
        <end position="641"/>
    </location>
</feature>
<feature type="strand" evidence="27">
    <location>
        <begin position="643"/>
        <end position="654"/>
    </location>
</feature>
<feature type="strand" evidence="27">
    <location>
        <begin position="661"/>
        <end position="673"/>
    </location>
</feature>
<feature type="helix" evidence="27">
    <location>
        <begin position="674"/>
        <end position="676"/>
    </location>
</feature>
<feature type="helix" evidence="27">
    <location>
        <begin position="677"/>
        <end position="689"/>
    </location>
</feature>
<feature type="helix" evidence="27">
    <location>
        <begin position="696"/>
        <end position="699"/>
    </location>
</feature>
<feature type="helix" evidence="27">
    <location>
        <begin position="706"/>
        <end position="712"/>
    </location>
</feature>
<feature type="turn" evidence="27">
    <location>
        <begin position="713"/>
        <end position="717"/>
    </location>
</feature>
<feature type="helix" evidence="27">
    <location>
        <begin position="718"/>
        <end position="727"/>
    </location>
</feature>
<feature type="turn" evidence="27">
    <location>
        <begin position="728"/>
        <end position="730"/>
    </location>
</feature>
<feature type="helix" evidence="27">
    <location>
        <begin position="732"/>
        <end position="741"/>
    </location>
</feature>
<feature type="helix" evidence="27">
    <location>
        <begin position="743"/>
        <end position="749"/>
    </location>
</feature>
<feature type="helix" evidence="27">
    <location>
        <begin position="752"/>
        <end position="754"/>
    </location>
</feature>
<feature type="helix" evidence="27">
    <location>
        <begin position="759"/>
        <end position="762"/>
    </location>
</feature>
<feature type="helix" evidence="27">
    <location>
        <begin position="766"/>
        <end position="772"/>
    </location>
</feature>
<feature type="strand" evidence="27">
    <location>
        <begin position="773"/>
        <end position="775"/>
    </location>
</feature>
<feature type="strand" evidence="27">
    <location>
        <begin position="778"/>
        <end position="784"/>
    </location>
</feature>
<feature type="turn" evidence="27">
    <location>
        <begin position="786"/>
        <end position="788"/>
    </location>
</feature>
<feature type="helix" evidence="27">
    <location>
        <begin position="789"/>
        <end position="793"/>
    </location>
</feature>
<feature type="helix" evidence="27">
    <location>
        <begin position="796"/>
        <end position="802"/>
    </location>
</feature>
<feature type="strand" evidence="27">
    <location>
        <begin position="813"/>
        <end position="815"/>
    </location>
</feature>
<feature type="strand" evidence="27">
    <location>
        <begin position="817"/>
        <end position="821"/>
    </location>
</feature>
<feature type="strand" evidence="27">
    <location>
        <begin position="839"/>
        <end position="844"/>
    </location>
</feature>
<feature type="strand" evidence="27">
    <location>
        <begin position="855"/>
        <end position="858"/>
    </location>
</feature>
<feature type="strand" evidence="27">
    <location>
        <begin position="862"/>
        <end position="871"/>
    </location>
</feature>
<feature type="helix" evidence="27">
    <location>
        <begin position="878"/>
        <end position="883"/>
    </location>
</feature>
<feature type="helix" evidence="27">
    <location>
        <begin position="886"/>
        <end position="893"/>
    </location>
</feature>
<feature type="helix" evidence="27">
    <location>
        <begin position="895"/>
        <end position="899"/>
    </location>
</feature>
<feature type="turn" evidence="29">
    <location>
        <begin position="900"/>
        <end position="903"/>
    </location>
</feature>
<feature type="strand" evidence="27">
    <location>
        <begin position="906"/>
        <end position="912"/>
    </location>
</feature>
<feature type="strand" evidence="27">
    <location>
        <begin position="916"/>
        <end position="926"/>
    </location>
</feature>
<feature type="helix" evidence="27">
    <location>
        <begin position="929"/>
        <end position="936"/>
    </location>
</feature>
<feature type="helix" evidence="27">
    <location>
        <begin position="939"/>
        <end position="942"/>
    </location>
</feature>
<feature type="helix" evidence="27">
    <location>
        <begin position="949"/>
        <end position="955"/>
    </location>
</feature>
<feature type="helix" evidence="27">
    <location>
        <begin position="958"/>
        <end position="963"/>
    </location>
</feature>
<feature type="helix" evidence="27">
    <location>
        <begin position="969"/>
        <end position="971"/>
    </location>
</feature>
<feature type="helix" evidence="27">
    <location>
        <begin position="974"/>
        <end position="979"/>
    </location>
</feature>
<feature type="helix" evidence="27">
    <location>
        <begin position="983"/>
        <end position="994"/>
    </location>
</feature>
<feature type="helix" evidence="27">
    <location>
        <begin position="1002"/>
        <end position="1008"/>
    </location>
</feature>
<feature type="turn" evidence="29">
    <location>
        <begin position="1011"/>
        <end position="1013"/>
    </location>
</feature>
<feature type="strand" evidence="27">
    <location>
        <begin position="1016"/>
        <end position="1023"/>
    </location>
</feature>
<feature type="helix" evidence="27">
    <location>
        <begin position="1026"/>
        <end position="1029"/>
    </location>
</feature>
<feature type="strand" evidence="27">
    <location>
        <begin position="1034"/>
        <end position="1036"/>
    </location>
</feature>
<keyword id="KW-0002">3D-structure</keyword>
<keyword id="KW-0007">Acetylation</keyword>
<keyword id="KW-0025">Alternative splicing</keyword>
<keyword id="KW-0225">Disease variant</keyword>
<keyword id="KW-1015">Disulfide bond</keyword>
<keyword id="KW-0378">Hydrolase</keyword>
<keyword id="KW-0479">Metal-binding</keyword>
<keyword id="KW-0482">Metalloprotease</keyword>
<keyword id="KW-0496">Mitochondrion</keyword>
<keyword id="KW-0523">Neurodegeneration</keyword>
<keyword id="KW-0645">Protease</keyword>
<keyword id="KW-1267">Proteomics identification</keyword>
<keyword id="KW-1185">Reference proteome</keyword>
<keyword id="KW-0809">Transit peptide</keyword>
<keyword id="KW-0862">Zinc</keyword>